<organism>
    <name type="scientific">Hylobates lar</name>
    <name type="common">Lar gibbon</name>
    <name type="synonym">White-handed gibbon</name>
    <dbReference type="NCBI Taxonomy" id="9580"/>
    <lineage>
        <taxon>Eukaryota</taxon>
        <taxon>Metazoa</taxon>
        <taxon>Chordata</taxon>
        <taxon>Craniata</taxon>
        <taxon>Vertebrata</taxon>
        <taxon>Euteleostomi</taxon>
        <taxon>Mammalia</taxon>
        <taxon>Eutheria</taxon>
        <taxon>Euarchontoglires</taxon>
        <taxon>Primates</taxon>
        <taxon>Haplorrhini</taxon>
        <taxon>Catarrhini</taxon>
        <taxon>Hylobatidae</taxon>
        <taxon>Hylobates</taxon>
    </lineage>
</organism>
<sequence length="450" mass="50991">MSDSKEPSVQQLGLLEEEQLRGLGFRQTRGYKSLAGCLGHGALVLQLLSFTLLAGLLIQVSKFPSSISQEQSKQDAIYQNLTQLKAAVGEFSEKSKLQEIYQELTQLKAAVGELPEKSKQQEIYQELTRLKAAVGELPEKSKQQEIYQELTRLKAAVGELPEKSKQQEIYQELTRLKAAVGELPEKSKQQEIYQELTRLKAAVGELPEKSKQQEIYQELTRLKAAVGELPEKSKQQEIYQELTRLKAAVGELPEKSKQQEIYQELTRLKAAVGELPEKSKQQEIYQELTQLKAAVERLCRPCPWEWTFFQGNCYFMSNSQRDWHDSVTACQEVGAQLVVIKSAEEQNFLQLQSSRSNRFAWMGLSDLNQEGTWQWVDGSPLSPSFKQYWNRGEPNNVGEEDCAEFSGNGWNDDKCNLAKFWICKKSAASCSRDEEQFLSPAPATPNPPPV</sequence>
<keyword id="KW-1064">Adaptive immunity</keyword>
<keyword id="KW-0106">Calcium</keyword>
<keyword id="KW-0130">Cell adhesion</keyword>
<keyword id="KW-1015">Disulfide bond</keyword>
<keyword id="KW-0254">Endocytosis</keyword>
<keyword id="KW-0325">Glycoprotein</keyword>
<keyword id="KW-0391">Immunity</keyword>
<keyword id="KW-0399">Innate immunity</keyword>
<keyword id="KW-0430">Lectin</keyword>
<keyword id="KW-0465">Mannose-binding</keyword>
<keyword id="KW-0472">Membrane</keyword>
<keyword id="KW-0479">Metal-binding</keyword>
<keyword id="KW-0675">Receptor</keyword>
<keyword id="KW-0677">Repeat</keyword>
<keyword id="KW-0735">Signal-anchor</keyword>
<keyword id="KW-0812">Transmembrane</keyword>
<keyword id="KW-1133">Transmembrane helix</keyword>
<dbReference type="EMBL" id="AY078877">
    <property type="protein sequence ID" value="AAL89538.1"/>
    <property type="molecule type" value="Genomic_DNA"/>
</dbReference>
<dbReference type="EMBL" id="AY078871">
    <property type="protein sequence ID" value="AAL89538.1"/>
    <property type="status" value="JOINED"/>
    <property type="molecule type" value="Genomic_DNA"/>
</dbReference>
<dbReference type="EMBL" id="AY078872">
    <property type="protein sequence ID" value="AAL89538.1"/>
    <property type="status" value="JOINED"/>
    <property type="molecule type" value="Genomic_DNA"/>
</dbReference>
<dbReference type="EMBL" id="AY078873">
    <property type="protein sequence ID" value="AAL89538.1"/>
    <property type="status" value="JOINED"/>
    <property type="molecule type" value="Genomic_DNA"/>
</dbReference>
<dbReference type="EMBL" id="AY078874">
    <property type="protein sequence ID" value="AAL89538.1"/>
    <property type="status" value="JOINED"/>
    <property type="molecule type" value="Genomic_DNA"/>
</dbReference>
<dbReference type="EMBL" id="AY078875">
    <property type="protein sequence ID" value="AAL89538.1"/>
    <property type="status" value="JOINED"/>
    <property type="molecule type" value="Genomic_DNA"/>
</dbReference>
<dbReference type="EMBL" id="AY078876">
    <property type="protein sequence ID" value="AAL89538.1"/>
    <property type="status" value="JOINED"/>
    <property type="molecule type" value="Genomic_DNA"/>
</dbReference>
<dbReference type="SMR" id="Q8HY03"/>
<dbReference type="GlyCosmos" id="Q8HY03">
    <property type="glycosylation" value="1 site, No reported glycans"/>
</dbReference>
<dbReference type="GO" id="GO:0016020">
    <property type="term" value="C:membrane"/>
    <property type="evidence" value="ECO:0007669"/>
    <property type="project" value="UniProtKB-SubCell"/>
</dbReference>
<dbReference type="GO" id="GO:0005537">
    <property type="term" value="F:D-mannose binding"/>
    <property type="evidence" value="ECO:0007669"/>
    <property type="project" value="UniProtKB-KW"/>
</dbReference>
<dbReference type="GO" id="GO:0046872">
    <property type="term" value="F:metal ion binding"/>
    <property type="evidence" value="ECO:0007669"/>
    <property type="project" value="UniProtKB-KW"/>
</dbReference>
<dbReference type="GO" id="GO:0002250">
    <property type="term" value="P:adaptive immune response"/>
    <property type="evidence" value="ECO:0007669"/>
    <property type="project" value="UniProtKB-KW"/>
</dbReference>
<dbReference type="GO" id="GO:0007155">
    <property type="term" value="P:cell adhesion"/>
    <property type="evidence" value="ECO:0007669"/>
    <property type="project" value="UniProtKB-KW"/>
</dbReference>
<dbReference type="GO" id="GO:0006897">
    <property type="term" value="P:endocytosis"/>
    <property type="evidence" value="ECO:0007669"/>
    <property type="project" value="UniProtKB-KW"/>
</dbReference>
<dbReference type="GO" id="GO:0045087">
    <property type="term" value="P:innate immune response"/>
    <property type="evidence" value="ECO:0007669"/>
    <property type="project" value="UniProtKB-KW"/>
</dbReference>
<dbReference type="CDD" id="cd03590">
    <property type="entry name" value="CLECT_DC-SIGN_like"/>
    <property type="match status" value="1"/>
</dbReference>
<dbReference type="FunFam" id="3.10.100.10:FF:000044">
    <property type="entry name" value="CD209 antigen, isoform CRA_b"/>
    <property type="match status" value="1"/>
</dbReference>
<dbReference type="Gene3D" id="3.10.100.10">
    <property type="entry name" value="Mannose-Binding Protein A, subunit A"/>
    <property type="match status" value="1"/>
</dbReference>
<dbReference type="InterPro" id="IPR001304">
    <property type="entry name" value="C-type_lectin-like"/>
</dbReference>
<dbReference type="InterPro" id="IPR016186">
    <property type="entry name" value="C-type_lectin-like/link_sf"/>
</dbReference>
<dbReference type="InterPro" id="IPR050111">
    <property type="entry name" value="C-type_lectin/snaclec_domain"/>
</dbReference>
<dbReference type="InterPro" id="IPR018378">
    <property type="entry name" value="C-type_lectin_CS"/>
</dbReference>
<dbReference type="InterPro" id="IPR033989">
    <property type="entry name" value="CD209-like_CTLD"/>
</dbReference>
<dbReference type="InterPro" id="IPR016187">
    <property type="entry name" value="CTDL_fold"/>
</dbReference>
<dbReference type="PANTHER" id="PTHR22803">
    <property type="entry name" value="MANNOSE, PHOSPHOLIPASE, LECTIN RECEPTOR RELATED"/>
    <property type="match status" value="1"/>
</dbReference>
<dbReference type="Pfam" id="PF00059">
    <property type="entry name" value="Lectin_C"/>
    <property type="match status" value="1"/>
</dbReference>
<dbReference type="SMART" id="SM00034">
    <property type="entry name" value="CLECT"/>
    <property type="match status" value="1"/>
</dbReference>
<dbReference type="SUPFAM" id="SSF56436">
    <property type="entry name" value="C-type lectin-like"/>
    <property type="match status" value="1"/>
</dbReference>
<dbReference type="PROSITE" id="PS00615">
    <property type="entry name" value="C_TYPE_LECTIN_1"/>
    <property type="match status" value="1"/>
</dbReference>
<dbReference type="PROSITE" id="PS50041">
    <property type="entry name" value="C_TYPE_LECTIN_2"/>
    <property type="match status" value="1"/>
</dbReference>
<proteinExistence type="inferred from homology"/>
<reference key="1">
    <citation type="journal article" date="2003" name="J. Virol.">
        <title>Novel member of the CD209 (DC-SIGN) gene family in primates.</title>
        <authorList>
            <person name="Bashirova A.A."/>
            <person name="Wu L."/>
            <person name="Cheng J."/>
            <person name="Martin T.D."/>
            <person name="Martin M.P."/>
            <person name="Benveniste R.E."/>
            <person name="Lifson J.D."/>
            <person name="Kewalramani V.N."/>
            <person name="Hughes A."/>
            <person name="Carrington M."/>
        </authorList>
    </citation>
    <scope>NUCLEOTIDE SEQUENCE [GENOMIC DNA]</scope>
    <source>
        <strain>Isolate B23</strain>
    </source>
</reference>
<comment type="function">
    <text evidence="1">Pathogen-recognition receptor expressed on the surface of immature dendritic cells (DCs) and involved in initiation of primary immune response. Thought to mediate the endocytosis of pathogens which are subsequently degraded in lysosomal compartments. The receptor returns to the cell membrane surface and the pathogen-derived antigens are presented to resting T-cells via MHC class II proteins to initiate the adaptive immune response. Probably recognizes in a calcium-dependent manner high mannose N-linked oligosaccharides in a variety of pathogen antigens (By similarity).</text>
</comment>
<comment type="function">
    <text evidence="1">On DCs it is a high affinity receptor for ICAM2 and ICAM3 by binding to mannose-like carbohydrates. May act as a DC rolling receptor that mediates transendothelial migration of DC presursors from blood to tissues by binding endothelial ICAM2. Seems to regulate DC-induced T-cell proliferation by binding to ICAM3 on T-cells in the immunological synapse formed between DC and T-cells (By similarity).</text>
</comment>
<comment type="subunit">
    <text evidence="2">Homotetramer. Interacts with C1QBP; the interaction is indicative for a C1q:C1QBP:CD209 signaling complex. Interacts with ICAM2 and ICAM3 by binding to mannose-like carbohydrates. Interacts (via C-type lectin domain) with CEACAM1 (via Lewis X moieties); this interaction is regulated by the glycosylation pattern of CEACAM1 on cell types and regulates contact between dendritic cells and neutrophils.</text>
</comment>
<comment type="subcellular location">
    <subcellularLocation>
        <location evidence="1">Membrane</location>
        <topology evidence="1">Single-pass type II membrane protein</topology>
    </subcellularLocation>
</comment>
<comment type="domain">
    <text evidence="1">The tandem repeat domain, also called neck domain, mediates oligomerization.</text>
</comment>
<evidence type="ECO:0000250" key="1"/>
<evidence type="ECO:0000250" key="2">
    <source>
        <dbReference type="UniProtKB" id="Q9NNX6"/>
    </source>
</evidence>
<evidence type="ECO:0000255" key="3"/>
<evidence type="ECO:0000255" key="4">
    <source>
        <dbReference type="PROSITE-ProRule" id="PRU00040"/>
    </source>
</evidence>
<protein>
    <recommendedName>
        <fullName>CD209 antigen</fullName>
    </recommendedName>
    <alternativeName>
        <fullName>Dendritic cell-specific ICAM-3-grabbing non-integrin 1</fullName>
        <shortName>DC-SIGN1</shortName>
    </alternativeName>
    <cdAntigenName>CD209</cdAntigenName>
</protein>
<gene>
    <name type="primary">CD209</name>
</gene>
<name>CD209_HYLLA</name>
<accession>Q8HY03</accession>
<feature type="chain" id="PRO_0000046597" description="CD209 antigen">
    <location>
        <begin position="1"/>
        <end position="450"/>
    </location>
</feature>
<feature type="topological domain" description="Cytoplasmic" evidence="3">
    <location>
        <begin position="1"/>
        <end position="37"/>
    </location>
</feature>
<feature type="transmembrane region" description="Helical; Signal-anchor for type II membrane protein" evidence="3">
    <location>
        <begin position="38"/>
        <end position="58"/>
    </location>
</feature>
<feature type="topological domain" description="Extracellular" evidence="3">
    <location>
        <begin position="59"/>
        <end position="450"/>
    </location>
</feature>
<feature type="repeat" description="1">
    <location>
        <begin position="96"/>
        <end position="118"/>
    </location>
</feature>
<feature type="repeat" description="2">
    <location>
        <begin position="119"/>
        <end position="141"/>
    </location>
</feature>
<feature type="repeat" description="3">
    <location>
        <begin position="142"/>
        <end position="164"/>
    </location>
</feature>
<feature type="repeat" description="4">
    <location>
        <begin position="165"/>
        <end position="187"/>
    </location>
</feature>
<feature type="repeat" description="5">
    <location>
        <begin position="188"/>
        <end position="210"/>
    </location>
</feature>
<feature type="repeat" description="6">
    <location>
        <begin position="211"/>
        <end position="233"/>
    </location>
</feature>
<feature type="repeat" description="7">
    <location>
        <begin position="234"/>
        <end position="256"/>
    </location>
</feature>
<feature type="repeat" description="8">
    <location>
        <begin position="257"/>
        <end position="279"/>
    </location>
</feature>
<feature type="repeat" description="9">
    <location>
        <begin position="280"/>
        <end position="303"/>
    </location>
</feature>
<feature type="domain" description="C-type lectin" evidence="4">
    <location>
        <begin position="309"/>
        <end position="424"/>
    </location>
</feature>
<feature type="region of interest" description="9 X approximate tandem repeats">
    <location>
        <begin position="96"/>
        <end position="303"/>
    </location>
</feature>
<feature type="short sequence motif" description="Endocytosis signal" evidence="1">
    <location>
        <begin position="14"/>
        <end position="15"/>
    </location>
</feature>
<feature type="short sequence motif" description="Endocytosis signal" evidence="3">
    <location>
        <begin position="16"/>
        <end position="18"/>
    </location>
</feature>
<feature type="short sequence motif" description="Endocytosis signal" evidence="3">
    <location>
        <begin position="31"/>
        <end position="34"/>
    </location>
</feature>
<feature type="binding site" evidence="1">
    <location>
        <position position="393"/>
    </location>
    <ligand>
        <name>Ca(2+)</name>
        <dbReference type="ChEBI" id="CHEBI:29108"/>
    </ligand>
</feature>
<feature type="binding site" evidence="1">
    <location>
        <position position="395"/>
    </location>
    <ligand>
        <name>Ca(2+)</name>
        <dbReference type="ChEBI" id="CHEBI:29108"/>
    </ligand>
</feature>
<feature type="binding site" evidence="1">
    <location>
        <position position="397"/>
    </location>
    <ligand>
        <name>Ca(2+)</name>
        <dbReference type="ChEBI" id="CHEBI:29108"/>
    </ligand>
</feature>
<feature type="binding site" evidence="1">
    <location>
        <position position="400"/>
    </location>
    <ligand>
        <name>Ca(2+)</name>
        <dbReference type="ChEBI" id="CHEBI:29108"/>
    </ligand>
</feature>
<feature type="binding site" evidence="1">
    <location>
        <position position="411"/>
    </location>
    <ligand>
        <name>Ca(2+)</name>
        <dbReference type="ChEBI" id="CHEBI:29108"/>
    </ligand>
</feature>
<feature type="binding site" evidence="1">
    <location>
        <position position="412"/>
    </location>
    <ligand>
        <name>Ca(2+)</name>
        <dbReference type="ChEBI" id="CHEBI:29108"/>
    </ligand>
</feature>
<feature type="glycosylation site" description="N-linked (GlcNAc...) asparagine" evidence="3">
    <location>
        <position position="80"/>
    </location>
</feature>
<feature type="disulfide bond" evidence="4">
    <location>
        <begin position="302"/>
        <end position="313"/>
    </location>
</feature>
<feature type="disulfide bond" evidence="4">
    <location>
        <begin position="330"/>
        <end position="423"/>
    </location>
</feature>
<feature type="disulfide bond" evidence="4">
    <location>
        <begin position="402"/>
        <end position="415"/>
    </location>
</feature>